<proteinExistence type="evidence at transcript level"/>
<keyword id="KW-0687">Ribonucleoprotein</keyword>
<keyword id="KW-0689">Ribosomal protein</keyword>
<evidence type="ECO:0000305" key="1"/>
<comment type="similarity">
    <text evidence="1">Belongs to the eukaryotic ribosomal protein eS19 family.</text>
</comment>
<dbReference type="EMBL" id="AF526201">
    <property type="protein sequence ID" value="AAN05586.1"/>
    <property type="molecule type" value="mRNA"/>
</dbReference>
<dbReference type="SMR" id="Q8ITC3"/>
<dbReference type="GO" id="GO:0022627">
    <property type="term" value="C:cytosolic small ribosomal subunit"/>
    <property type="evidence" value="ECO:0007669"/>
    <property type="project" value="TreeGrafter"/>
</dbReference>
<dbReference type="GO" id="GO:0003723">
    <property type="term" value="F:RNA binding"/>
    <property type="evidence" value="ECO:0007669"/>
    <property type="project" value="TreeGrafter"/>
</dbReference>
<dbReference type="GO" id="GO:0003735">
    <property type="term" value="F:structural constituent of ribosome"/>
    <property type="evidence" value="ECO:0007669"/>
    <property type="project" value="InterPro"/>
</dbReference>
<dbReference type="GO" id="GO:0000028">
    <property type="term" value="P:ribosomal small subunit assembly"/>
    <property type="evidence" value="ECO:0007669"/>
    <property type="project" value="TreeGrafter"/>
</dbReference>
<dbReference type="GO" id="GO:0006412">
    <property type="term" value="P:translation"/>
    <property type="evidence" value="ECO:0007669"/>
    <property type="project" value="InterPro"/>
</dbReference>
<dbReference type="FunFam" id="1.10.10.10:FF:000118">
    <property type="entry name" value="40S ribosomal protein S19"/>
    <property type="match status" value="1"/>
</dbReference>
<dbReference type="Gene3D" id="1.10.10.10">
    <property type="entry name" value="Winged helix-like DNA-binding domain superfamily/Winged helix DNA-binding domain"/>
    <property type="match status" value="1"/>
</dbReference>
<dbReference type="InterPro" id="IPR001266">
    <property type="entry name" value="Ribosomal_eS19"/>
</dbReference>
<dbReference type="InterPro" id="IPR018277">
    <property type="entry name" value="Ribosomal_eS19_CS"/>
</dbReference>
<dbReference type="InterPro" id="IPR036388">
    <property type="entry name" value="WH-like_DNA-bd_sf"/>
</dbReference>
<dbReference type="InterPro" id="IPR036390">
    <property type="entry name" value="WH_DNA-bd_sf"/>
</dbReference>
<dbReference type="PANTHER" id="PTHR11710">
    <property type="entry name" value="40S RIBOSOMAL PROTEIN S19"/>
    <property type="match status" value="1"/>
</dbReference>
<dbReference type="PANTHER" id="PTHR11710:SF0">
    <property type="entry name" value="40S RIBOSOMAL PROTEIN S19"/>
    <property type="match status" value="1"/>
</dbReference>
<dbReference type="Pfam" id="PF01090">
    <property type="entry name" value="Ribosomal_S19e"/>
    <property type="match status" value="1"/>
</dbReference>
<dbReference type="SMART" id="SM01413">
    <property type="entry name" value="Ribosomal_S19e"/>
    <property type="match status" value="1"/>
</dbReference>
<dbReference type="SUPFAM" id="SSF46785">
    <property type="entry name" value="Winged helix' DNA-binding domain"/>
    <property type="match status" value="1"/>
</dbReference>
<dbReference type="PROSITE" id="PS00628">
    <property type="entry name" value="RIBOSOMAL_S19E"/>
    <property type="match status" value="1"/>
</dbReference>
<sequence length="144" mass="16091">MGISVKDVDSHTFTKALAAFLKKSGKMKIPEWATIIKLSKFNELSPYDEDWFYTRAASICRHLYIRSPAGVGALTKIYGDRKRNGTVPSHYCRSSGSVARRVLQALETQKLVEKDANGGRKLTSQGQKDLDRIAAQVKEKTKSK</sequence>
<reference key="1">
    <citation type="submission" date="2002-07" db="EMBL/GenBank/DDBJ databases">
        <authorList>
            <person name="Song L."/>
            <person name="Xu W."/>
            <person name="Li H."/>
            <person name="Guo X."/>
            <person name="Xiang J."/>
            <person name="Cui Z."/>
            <person name="Cai Z."/>
        </authorList>
    </citation>
    <scope>NUCLEOTIDE SEQUENCE [MRNA]</scope>
</reference>
<name>RS19_ARGIR</name>
<organism>
    <name type="scientific">Argopecten irradians</name>
    <name type="common">Bay scallop</name>
    <name type="synonym">Aequipecten irradians</name>
    <dbReference type="NCBI Taxonomy" id="31199"/>
    <lineage>
        <taxon>Eukaryota</taxon>
        <taxon>Metazoa</taxon>
        <taxon>Spiralia</taxon>
        <taxon>Lophotrochozoa</taxon>
        <taxon>Mollusca</taxon>
        <taxon>Bivalvia</taxon>
        <taxon>Autobranchia</taxon>
        <taxon>Pteriomorphia</taxon>
        <taxon>Pectinida</taxon>
        <taxon>Pectinoidea</taxon>
        <taxon>Pectinidae</taxon>
        <taxon>Argopecten</taxon>
    </lineage>
</organism>
<accession>Q8ITC3</accession>
<protein>
    <recommendedName>
        <fullName evidence="1">Small ribosomal subunit protein eS19</fullName>
    </recommendedName>
    <alternativeName>
        <fullName>40S ribosomal protein S19</fullName>
    </alternativeName>
</protein>
<feature type="chain" id="PRO_0000153819" description="Small ribosomal subunit protein eS19">
    <location>
        <begin position="1"/>
        <end position="144"/>
    </location>
</feature>
<gene>
    <name type="primary">RPS19</name>
</gene>